<keyword id="KW-0131">Cell cycle</keyword>
<keyword id="KW-0132">Cell division</keyword>
<keyword id="KW-0133">Cell shape</keyword>
<keyword id="KW-0961">Cell wall biogenesis/degradation</keyword>
<keyword id="KW-0963">Cytoplasm</keyword>
<keyword id="KW-0274">FAD</keyword>
<keyword id="KW-0285">Flavoprotein</keyword>
<keyword id="KW-0521">NADP</keyword>
<keyword id="KW-0560">Oxidoreductase</keyword>
<keyword id="KW-0573">Peptidoglycan synthesis</keyword>
<protein>
    <recommendedName>
        <fullName>UDP-N-acetylenolpyruvoylglucosamine reductase</fullName>
        <ecNumber>1.3.1.98</ecNumber>
    </recommendedName>
    <alternativeName>
        <fullName>UDP-N-acetylmuramate dehydrogenase</fullName>
    </alternativeName>
</protein>
<gene>
    <name type="primary">murB</name>
    <name type="ordered locus">RC0332</name>
</gene>
<proteinExistence type="inferred from homology"/>
<sequence>MLILPIVKGEYKKDYNLKHLTWFKVGGNAEIFFKPLDSEDLKSFLIQNKQKLPIKTFGAGSNIIIRDGGIEGVVIKLGQNFSNIEFVDNHLIVGSSCLNYNLAKFCQANAISGFEFLVGIPGTIGGGVAMNAGAYGSEFKDIVVQIEAIDFAGNFLTFTNEEIGFKYRSNNLPKNLIILKAVFKINKGDSENILLRMNEIKNARSSTQPIKERTGGSTFANPEGRKSWELIDKAGLRGYRIGGASMSEFHCNFMINNGDATAKDLEDLGDFVRQKVCEDSGVKLEWEIKRIGRHP</sequence>
<name>MURB_RICCN</name>
<organism>
    <name type="scientific">Rickettsia conorii (strain ATCC VR-613 / Malish 7)</name>
    <dbReference type="NCBI Taxonomy" id="272944"/>
    <lineage>
        <taxon>Bacteria</taxon>
        <taxon>Pseudomonadati</taxon>
        <taxon>Pseudomonadota</taxon>
        <taxon>Alphaproteobacteria</taxon>
        <taxon>Rickettsiales</taxon>
        <taxon>Rickettsiaceae</taxon>
        <taxon>Rickettsieae</taxon>
        <taxon>Rickettsia</taxon>
        <taxon>spotted fever group</taxon>
    </lineage>
</organism>
<reference key="1">
    <citation type="journal article" date="2001" name="Science">
        <title>Mechanisms of evolution in Rickettsia conorii and R. prowazekii.</title>
        <authorList>
            <person name="Ogata H."/>
            <person name="Audic S."/>
            <person name="Renesto-Audiffren P."/>
            <person name="Fournier P.-E."/>
            <person name="Barbe V."/>
            <person name="Samson D."/>
            <person name="Roux V."/>
            <person name="Cossart P."/>
            <person name="Weissenbach J."/>
            <person name="Claverie J.-M."/>
            <person name="Raoult D."/>
        </authorList>
    </citation>
    <scope>NUCLEOTIDE SEQUENCE [LARGE SCALE GENOMIC DNA]</scope>
    <source>
        <strain>ATCC VR-613 / Malish 7</strain>
    </source>
</reference>
<accession>Q92IT8</accession>
<evidence type="ECO:0000250" key="1"/>
<evidence type="ECO:0000305" key="2"/>
<dbReference type="EC" id="1.3.1.98"/>
<dbReference type="EMBL" id="AE006914">
    <property type="protein sequence ID" value="AAL02870.1"/>
    <property type="status" value="ALT_INIT"/>
    <property type="molecule type" value="Genomic_DNA"/>
</dbReference>
<dbReference type="PIR" id="D97741">
    <property type="entry name" value="D97741"/>
</dbReference>
<dbReference type="RefSeq" id="WP_041471710.1">
    <property type="nucleotide sequence ID" value="NC_003103.1"/>
</dbReference>
<dbReference type="SMR" id="Q92IT8"/>
<dbReference type="GeneID" id="23331426"/>
<dbReference type="KEGG" id="rco:RC0332"/>
<dbReference type="HOGENOM" id="CLU_035304_1_0_5"/>
<dbReference type="UniPathway" id="UPA00219"/>
<dbReference type="Proteomes" id="UP000000816">
    <property type="component" value="Chromosome"/>
</dbReference>
<dbReference type="GO" id="GO:0005829">
    <property type="term" value="C:cytosol"/>
    <property type="evidence" value="ECO:0007669"/>
    <property type="project" value="TreeGrafter"/>
</dbReference>
<dbReference type="GO" id="GO:0071949">
    <property type="term" value="F:FAD binding"/>
    <property type="evidence" value="ECO:0007669"/>
    <property type="project" value="InterPro"/>
</dbReference>
<dbReference type="GO" id="GO:0008762">
    <property type="term" value="F:UDP-N-acetylmuramate dehydrogenase activity"/>
    <property type="evidence" value="ECO:0007669"/>
    <property type="project" value="UniProtKB-UniRule"/>
</dbReference>
<dbReference type="GO" id="GO:0051301">
    <property type="term" value="P:cell division"/>
    <property type="evidence" value="ECO:0007669"/>
    <property type="project" value="UniProtKB-KW"/>
</dbReference>
<dbReference type="GO" id="GO:0071555">
    <property type="term" value="P:cell wall organization"/>
    <property type="evidence" value="ECO:0007669"/>
    <property type="project" value="UniProtKB-KW"/>
</dbReference>
<dbReference type="GO" id="GO:0009252">
    <property type="term" value="P:peptidoglycan biosynthetic process"/>
    <property type="evidence" value="ECO:0007669"/>
    <property type="project" value="UniProtKB-UniRule"/>
</dbReference>
<dbReference type="GO" id="GO:0008360">
    <property type="term" value="P:regulation of cell shape"/>
    <property type="evidence" value="ECO:0007669"/>
    <property type="project" value="UniProtKB-KW"/>
</dbReference>
<dbReference type="Gene3D" id="3.30.465.10">
    <property type="match status" value="1"/>
</dbReference>
<dbReference type="Gene3D" id="3.90.78.10">
    <property type="entry name" value="UDP-N-acetylenolpyruvoylglucosamine reductase, C-terminal domain"/>
    <property type="match status" value="1"/>
</dbReference>
<dbReference type="Gene3D" id="3.30.43.10">
    <property type="entry name" value="Uridine Diphospho-n-acetylenolpyruvylglucosamine Reductase, domain 2"/>
    <property type="match status" value="1"/>
</dbReference>
<dbReference type="HAMAP" id="MF_00037">
    <property type="entry name" value="MurB"/>
    <property type="match status" value="1"/>
</dbReference>
<dbReference type="InterPro" id="IPR016166">
    <property type="entry name" value="FAD-bd_PCMH"/>
</dbReference>
<dbReference type="InterPro" id="IPR036318">
    <property type="entry name" value="FAD-bd_PCMH-like_sf"/>
</dbReference>
<dbReference type="InterPro" id="IPR016167">
    <property type="entry name" value="FAD-bd_PCMH_sub1"/>
</dbReference>
<dbReference type="InterPro" id="IPR016169">
    <property type="entry name" value="FAD-bd_PCMH_sub2"/>
</dbReference>
<dbReference type="InterPro" id="IPR003170">
    <property type="entry name" value="MurB"/>
</dbReference>
<dbReference type="InterPro" id="IPR011601">
    <property type="entry name" value="MurB_C"/>
</dbReference>
<dbReference type="InterPro" id="IPR036635">
    <property type="entry name" value="MurB_C_sf"/>
</dbReference>
<dbReference type="InterPro" id="IPR006094">
    <property type="entry name" value="Oxid_FAD_bind_N"/>
</dbReference>
<dbReference type="NCBIfam" id="TIGR00179">
    <property type="entry name" value="murB"/>
    <property type="match status" value="1"/>
</dbReference>
<dbReference type="NCBIfam" id="NF010480">
    <property type="entry name" value="PRK13905.1"/>
    <property type="match status" value="1"/>
</dbReference>
<dbReference type="PANTHER" id="PTHR21071">
    <property type="entry name" value="UDP-N-ACETYLENOLPYRUVOYLGLUCOSAMINE REDUCTASE"/>
    <property type="match status" value="1"/>
</dbReference>
<dbReference type="PANTHER" id="PTHR21071:SF4">
    <property type="entry name" value="UDP-N-ACETYLENOLPYRUVOYLGLUCOSAMINE REDUCTASE"/>
    <property type="match status" value="1"/>
</dbReference>
<dbReference type="Pfam" id="PF01565">
    <property type="entry name" value="FAD_binding_4"/>
    <property type="match status" value="1"/>
</dbReference>
<dbReference type="Pfam" id="PF02873">
    <property type="entry name" value="MurB_C"/>
    <property type="match status" value="1"/>
</dbReference>
<dbReference type="SUPFAM" id="SSF56176">
    <property type="entry name" value="FAD-binding/transporter-associated domain-like"/>
    <property type="match status" value="1"/>
</dbReference>
<dbReference type="SUPFAM" id="SSF56194">
    <property type="entry name" value="Uridine diphospho-N-Acetylenolpyruvylglucosamine reductase, MurB, C-terminal domain"/>
    <property type="match status" value="1"/>
</dbReference>
<dbReference type="PROSITE" id="PS51387">
    <property type="entry name" value="FAD_PCMH"/>
    <property type="match status" value="1"/>
</dbReference>
<feature type="chain" id="PRO_0000179250" description="UDP-N-acetylenolpyruvoylglucosamine reductase">
    <location>
        <begin position="1"/>
        <end position="295"/>
    </location>
</feature>
<feature type="domain" description="FAD-binding PCMH-type">
    <location>
        <begin position="24"/>
        <end position="188"/>
    </location>
</feature>
<feature type="active site" evidence="1">
    <location>
        <position position="168"/>
    </location>
</feature>
<feature type="active site" description="Proton donor" evidence="1">
    <location>
        <position position="217"/>
    </location>
</feature>
<feature type="active site" evidence="1">
    <location>
        <position position="287"/>
    </location>
</feature>
<comment type="function">
    <text evidence="1">Cell wall formation.</text>
</comment>
<comment type="catalytic activity">
    <reaction>
        <text>UDP-N-acetyl-alpha-D-muramate + NADP(+) = UDP-N-acetyl-3-O-(1-carboxyvinyl)-alpha-D-glucosamine + NADPH + H(+)</text>
        <dbReference type="Rhea" id="RHEA:12248"/>
        <dbReference type="ChEBI" id="CHEBI:15378"/>
        <dbReference type="ChEBI" id="CHEBI:57783"/>
        <dbReference type="ChEBI" id="CHEBI:58349"/>
        <dbReference type="ChEBI" id="CHEBI:68483"/>
        <dbReference type="ChEBI" id="CHEBI:70757"/>
        <dbReference type="EC" id="1.3.1.98"/>
    </reaction>
</comment>
<comment type="cofactor">
    <cofactor evidence="1">
        <name>FAD</name>
        <dbReference type="ChEBI" id="CHEBI:57692"/>
    </cofactor>
</comment>
<comment type="pathway">
    <text>Cell wall biogenesis; peptidoglycan biosynthesis.</text>
</comment>
<comment type="subcellular location">
    <subcellularLocation>
        <location evidence="1">Cytoplasm</location>
    </subcellularLocation>
</comment>
<comment type="similarity">
    <text evidence="2">Belongs to the MurB family.</text>
</comment>
<comment type="sequence caution" evidence="2">
    <conflict type="erroneous initiation">
        <sequence resource="EMBL-CDS" id="AAL02870"/>
    </conflict>
</comment>